<keyword id="KW-0342">GTP-binding</keyword>
<keyword id="KW-0547">Nucleotide-binding</keyword>
<keyword id="KW-1185">Reference proteome</keyword>
<keyword id="KW-0677">Repeat</keyword>
<keyword id="KW-0690">Ribosome biogenesis</keyword>
<gene>
    <name evidence="1" type="primary">der</name>
    <name type="synonym">engA</name>
    <name type="ordered locus">Noc_0822</name>
</gene>
<evidence type="ECO:0000255" key="1">
    <source>
        <dbReference type="HAMAP-Rule" id="MF_00195"/>
    </source>
</evidence>
<protein>
    <recommendedName>
        <fullName evidence="1">GTPase Der</fullName>
    </recommendedName>
    <alternativeName>
        <fullName evidence="1">GTP-binding protein EngA</fullName>
    </alternativeName>
</protein>
<proteinExistence type="inferred from homology"/>
<comment type="function">
    <text evidence="1">GTPase that plays an essential role in the late steps of ribosome biogenesis.</text>
</comment>
<comment type="subunit">
    <text evidence="1">Associates with the 50S ribosomal subunit.</text>
</comment>
<comment type="similarity">
    <text evidence="1">Belongs to the TRAFAC class TrmE-Era-EngA-EngB-Septin-like GTPase superfamily. EngA (Der) GTPase family.</text>
</comment>
<accession>Q3JCW1</accession>
<feature type="chain" id="PRO_1000011679" description="GTPase Der">
    <location>
        <begin position="1"/>
        <end position="464"/>
    </location>
</feature>
<feature type="domain" description="EngA-type G 1">
    <location>
        <begin position="3"/>
        <end position="166"/>
    </location>
</feature>
<feature type="domain" description="EngA-type G 2">
    <location>
        <begin position="177"/>
        <end position="350"/>
    </location>
</feature>
<feature type="domain" description="KH-like" evidence="1">
    <location>
        <begin position="351"/>
        <end position="435"/>
    </location>
</feature>
<feature type="binding site" evidence="1">
    <location>
        <begin position="9"/>
        <end position="16"/>
    </location>
    <ligand>
        <name>GTP</name>
        <dbReference type="ChEBI" id="CHEBI:37565"/>
        <label>1</label>
    </ligand>
</feature>
<feature type="binding site" evidence="1">
    <location>
        <begin position="56"/>
        <end position="60"/>
    </location>
    <ligand>
        <name>GTP</name>
        <dbReference type="ChEBI" id="CHEBI:37565"/>
        <label>1</label>
    </ligand>
</feature>
<feature type="binding site" evidence="1">
    <location>
        <begin position="118"/>
        <end position="121"/>
    </location>
    <ligand>
        <name>GTP</name>
        <dbReference type="ChEBI" id="CHEBI:37565"/>
        <label>1</label>
    </ligand>
</feature>
<feature type="binding site" evidence="1">
    <location>
        <begin position="183"/>
        <end position="190"/>
    </location>
    <ligand>
        <name>GTP</name>
        <dbReference type="ChEBI" id="CHEBI:37565"/>
        <label>2</label>
    </ligand>
</feature>
<feature type="binding site" evidence="1">
    <location>
        <begin position="230"/>
        <end position="234"/>
    </location>
    <ligand>
        <name>GTP</name>
        <dbReference type="ChEBI" id="CHEBI:37565"/>
        <label>2</label>
    </ligand>
</feature>
<feature type="binding site" evidence="1">
    <location>
        <begin position="295"/>
        <end position="298"/>
    </location>
    <ligand>
        <name>GTP</name>
        <dbReference type="ChEBI" id="CHEBI:37565"/>
        <label>2</label>
    </ligand>
</feature>
<sequence length="464" mass="51561">MNALVALVGRPNVGKSTLFNRLTRSRDALVVDQPGVTRDRKYGLAHYGEQSFFVVDTGGVMEQESGIGRLMRAQAQLAIEEADVIFFLVDGREGLSSLDEEIAAWLRCAQKPLKLVINKAEGRDGDLVASEFYRLGLGEPIIISAQQGQGVGRLLEALLTLLPVLEREESEIQAKGLQFAVIGRPNVGKSTLVNRILGEERVLSSEIPGTTRDSISIPFRHHGKDYTLVDTAGIRRRSRILDKVEKFSVIQSLQSIAIAQVVILVIDAHDSVVEQDLHLAGVILESGKGVVIAVNKWDGLPLEQRQRVKTDLDRRLPFLVFARIHFISALHGSGVGDLFPSIDEAYQSANSHLPTGELNRALLAAVEKYPPPVVKGRRIKLRYAHQGGQNPPKIIIHGNQAEAVSANYRRYLINYFRNAFGLMGTPIALEFRTVKNPFKGRANILTQRQQQKRKRLVRFRKGRD</sequence>
<name>DER_NITOC</name>
<dbReference type="EMBL" id="CP000127">
    <property type="protein sequence ID" value="ABA57335.1"/>
    <property type="molecule type" value="Genomic_DNA"/>
</dbReference>
<dbReference type="RefSeq" id="WP_002811576.1">
    <property type="nucleotide sequence ID" value="NC_007484.1"/>
</dbReference>
<dbReference type="SMR" id="Q3JCW1"/>
<dbReference type="FunCoup" id="Q3JCW1">
    <property type="interactions" value="517"/>
</dbReference>
<dbReference type="STRING" id="323261.Noc_0822"/>
<dbReference type="KEGG" id="noc:Noc_0822"/>
<dbReference type="eggNOG" id="COG1160">
    <property type="taxonomic scope" value="Bacteria"/>
</dbReference>
<dbReference type="HOGENOM" id="CLU_016077_5_1_6"/>
<dbReference type="InParanoid" id="Q3JCW1"/>
<dbReference type="Proteomes" id="UP000006838">
    <property type="component" value="Chromosome"/>
</dbReference>
<dbReference type="GO" id="GO:0005525">
    <property type="term" value="F:GTP binding"/>
    <property type="evidence" value="ECO:0007669"/>
    <property type="project" value="UniProtKB-UniRule"/>
</dbReference>
<dbReference type="GO" id="GO:0043022">
    <property type="term" value="F:ribosome binding"/>
    <property type="evidence" value="ECO:0007669"/>
    <property type="project" value="TreeGrafter"/>
</dbReference>
<dbReference type="GO" id="GO:0042254">
    <property type="term" value="P:ribosome biogenesis"/>
    <property type="evidence" value="ECO:0007669"/>
    <property type="project" value="UniProtKB-KW"/>
</dbReference>
<dbReference type="CDD" id="cd01894">
    <property type="entry name" value="EngA1"/>
    <property type="match status" value="1"/>
</dbReference>
<dbReference type="CDD" id="cd01895">
    <property type="entry name" value="EngA2"/>
    <property type="match status" value="1"/>
</dbReference>
<dbReference type="FunFam" id="3.30.300.20:FF:000004">
    <property type="entry name" value="GTPase Der"/>
    <property type="match status" value="1"/>
</dbReference>
<dbReference type="FunFam" id="3.40.50.300:FF:000040">
    <property type="entry name" value="GTPase Der"/>
    <property type="match status" value="1"/>
</dbReference>
<dbReference type="FunFam" id="3.40.50.300:FF:000057">
    <property type="entry name" value="GTPase Der"/>
    <property type="match status" value="1"/>
</dbReference>
<dbReference type="Gene3D" id="3.30.300.20">
    <property type="match status" value="1"/>
</dbReference>
<dbReference type="Gene3D" id="3.40.50.300">
    <property type="entry name" value="P-loop containing nucleotide triphosphate hydrolases"/>
    <property type="match status" value="2"/>
</dbReference>
<dbReference type="HAMAP" id="MF_00195">
    <property type="entry name" value="GTPase_Der"/>
    <property type="match status" value="1"/>
</dbReference>
<dbReference type="InterPro" id="IPR031166">
    <property type="entry name" value="G_ENGA"/>
</dbReference>
<dbReference type="InterPro" id="IPR006073">
    <property type="entry name" value="GTP-bd"/>
</dbReference>
<dbReference type="InterPro" id="IPR016484">
    <property type="entry name" value="GTPase_Der"/>
</dbReference>
<dbReference type="InterPro" id="IPR032859">
    <property type="entry name" value="KH_dom-like"/>
</dbReference>
<dbReference type="InterPro" id="IPR015946">
    <property type="entry name" value="KH_dom-like_a/b"/>
</dbReference>
<dbReference type="InterPro" id="IPR027417">
    <property type="entry name" value="P-loop_NTPase"/>
</dbReference>
<dbReference type="InterPro" id="IPR005225">
    <property type="entry name" value="Small_GTP-bd"/>
</dbReference>
<dbReference type="NCBIfam" id="TIGR03594">
    <property type="entry name" value="GTPase_EngA"/>
    <property type="match status" value="1"/>
</dbReference>
<dbReference type="NCBIfam" id="TIGR00231">
    <property type="entry name" value="small_GTP"/>
    <property type="match status" value="2"/>
</dbReference>
<dbReference type="PANTHER" id="PTHR43834">
    <property type="entry name" value="GTPASE DER"/>
    <property type="match status" value="1"/>
</dbReference>
<dbReference type="PANTHER" id="PTHR43834:SF6">
    <property type="entry name" value="GTPASE DER"/>
    <property type="match status" value="1"/>
</dbReference>
<dbReference type="Pfam" id="PF14714">
    <property type="entry name" value="KH_dom-like"/>
    <property type="match status" value="1"/>
</dbReference>
<dbReference type="Pfam" id="PF01926">
    <property type="entry name" value="MMR_HSR1"/>
    <property type="match status" value="2"/>
</dbReference>
<dbReference type="PIRSF" id="PIRSF006485">
    <property type="entry name" value="GTP-binding_EngA"/>
    <property type="match status" value="1"/>
</dbReference>
<dbReference type="PRINTS" id="PR00326">
    <property type="entry name" value="GTP1OBG"/>
</dbReference>
<dbReference type="SUPFAM" id="SSF52540">
    <property type="entry name" value="P-loop containing nucleoside triphosphate hydrolases"/>
    <property type="match status" value="2"/>
</dbReference>
<dbReference type="PROSITE" id="PS51712">
    <property type="entry name" value="G_ENGA"/>
    <property type="match status" value="2"/>
</dbReference>
<organism>
    <name type="scientific">Nitrosococcus oceani (strain ATCC 19707 / BCRC 17464 / JCM 30415 / NCIMB 11848 / C-107)</name>
    <dbReference type="NCBI Taxonomy" id="323261"/>
    <lineage>
        <taxon>Bacteria</taxon>
        <taxon>Pseudomonadati</taxon>
        <taxon>Pseudomonadota</taxon>
        <taxon>Gammaproteobacteria</taxon>
        <taxon>Chromatiales</taxon>
        <taxon>Chromatiaceae</taxon>
        <taxon>Nitrosococcus</taxon>
    </lineage>
</organism>
<reference key="1">
    <citation type="journal article" date="2006" name="Appl. Environ. Microbiol.">
        <title>Complete genome sequence of the marine, chemolithoautotrophic, ammonia-oxidizing bacterium Nitrosococcus oceani ATCC 19707.</title>
        <authorList>
            <person name="Klotz M.G."/>
            <person name="Arp D.J."/>
            <person name="Chain P.S.G."/>
            <person name="El-Sheikh A.F."/>
            <person name="Hauser L.J."/>
            <person name="Hommes N.G."/>
            <person name="Larimer F.W."/>
            <person name="Malfatti S.A."/>
            <person name="Norton J.M."/>
            <person name="Poret-Peterson A.T."/>
            <person name="Vergez L.M."/>
            <person name="Ward B.B."/>
        </authorList>
    </citation>
    <scope>NUCLEOTIDE SEQUENCE [LARGE SCALE GENOMIC DNA]</scope>
    <source>
        <strain>ATCC 19707 / BCRC 17464 / JCM 30415 / NCIMB 11848 / C-107</strain>
    </source>
</reference>